<feature type="peptide" id="PRO_0000421492" description="Extended FMRFamide-2" evidence="3">
    <location>
        <begin position="1"/>
        <end position="9"/>
    </location>
</feature>
<feature type="unsure residue" description="L or I" evidence="3">
    <location>
        <position position="4"/>
    </location>
</feature>
<feature type="unsure residue" description="L or I" evidence="3">
    <location>
        <position position="6"/>
    </location>
</feature>
<comment type="function">
    <text evidence="1">FMRFamides and FMRFamide-like peptides are neuropeptides.</text>
</comment>
<comment type="subcellular location">
    <subcellularLocation>
        <location evidence="6">Secreted</location>
    </subcellularLocation>
</comment>
<comment type="similarity">
    <text evidence="2">Belongs to the FARP (FMRF amide related peptide) family.</text>
</comment>
<proteinExistence type="evidence at protein level"/>
<protein>
    <recommendedName>
        <fullName evidence="4">Extended FMRFamide-2</fullName>
        <shortName evidence="4">FMRFa-2</shortName>
    </recommendedName>
</protein>
<evidence type="ECO:0000250" key="1">
    <source>
        <dbReference type="UniProtKB" id="P34405"/>
    </source>
</evidence>
<evidence type="ECO:0000255" key="2"/>
<evidence type="ECO:0000269" key="3">
    <source>
    </source>
</evidence>
<evidence type="ECO:0000303" key="4">
    <source>
    </source>
</evidence>
<evidence type="ECO:0000305" key="5"/>
<evidence type="ECO:0000305" key="6">
    <source>
    </source>
</evidence>
<sequence>ADYLRLARA</sequence>
<organism>
    <name type="scientific">Tyrannophasma gladiator</name>
    <name type="common">Gladiator</name>
    <name type="synonym">Heel-walker</name>
    <dbReference type="NCBI Taxonomy" id="270861"/>
    <lineage>
        <taxon>Eukaryota</taxon>
        <taxon>Metazoa</taxon>
        <taxon>Ecdysozoa</taxon>
        <taxon>Arthropoda</taxon>
        <taxon>Hexapoda</taxon>
        <taxon>Insecta</taxon>
        <taxon>Pterygota</taxon>
        <taxon>Neoptera</taxon>
        <taxon>Polyneoptera</taxon>
        <taxon>Mantophasmatodea</taxon>
        <taxon>Mantophasmatodea incertae sedis</taxon>
        <taxon>Tyrannophasma</taxon>
    </lineage>
</organism>
<reference evidence="5" key="1">
    <citation type="journal article" date="2012" name="Syst. Biol.">
        <title>Peptidomics-based phylogeny and biogeography of Mantophasmatodea (Hexapoda).</title>
        <authorList>
            <person name="Predel R."/>
            <person name="Neupert S."/>
            <person name="Huetteroth W."/>
            <person name="Kahnt J."/>
            <person name="Waidelich D."/>
            <person name="Roth S."/>
        </authorList>
    </citation>
    <scope>PROTEIN SEQUENCE</scope>
    <source>
        <tissue evidence="3">Thoracic perisympathetic organs</tissue>
    </source>
</reference>
<dbReference type="GO" id="GO:0005576">
    <property type="term" value="C:extracellular region"/>
    <property type="evidence" value="ECO:0007669"/>
    <property type="project" value="UniProtKB-SubCell"/>
</dbReference>
<dbReference type="GO" id="GO:0007218">
    <property type="term" value="P:neuropeptide signaling pathway"/>
    <property type="evidence" value="ECO:0007669"/>
    <property type="project" value="UniProtKB-KW"/>
</dbReference>
<keyword id="KW-0903">Direct protein sequencing</keyword>
<keyword id="KW-0527">Neuropeptide</keyword>
<keyword id="KW-0964">Secreted</keyword>
<name>FAR2_TYRGL</name>
<accession>B3A0H7</accession>